<feature type="chain" id="PRO_1000197853" description="UV DNA damage endonuclease">
    <location>
        <begin position="1"/>
        <end position="317"/>
    </location>
</feature>
<reference key="1">
    <citation type="submission" date="2009-02" db="EMBL/GenBank/DDBJ databases">
        <title>Genome sequence of Bacillus cereus 03BB102.</title>
        <authorList>
            <person name="Dodson R.J."/>
            <person name="Jackson P."/>
            <person name="Munk A.C."/>
            <person name="Brettin T."/>
            <person name="Bruce D."/>
            <person name="Detter C."/>
            <person name="Tapia R."/>
            <person name="Han C."/>
            <person name="Sutton G."/>
            <person name="Sims D."/>
        </authorList>
    </citation>
    <scope>NUCLEOTIDE SEQUENCE [LARGE SCALE GENOMIC DNA]</scope>
    <source>
        <strain>03BB102</strain>
    </source>
</reference>
<accession>C1F0S5</accession>
<organism>
    <name type="scientific">Bacillus cereus (strain 03BB102)</name>
    <dbReference type="NCBI Taxonomy" id="572264"/>
    <lineage>
        <taxon>Bacteria</taxon>
        <taxon>Bacillati</taxon>
        <taxon>Bacillota</taxon>
        <taxon>Bacilli</taxon>
        <taxon>Bacillales</taxon>
        <taxon>Bacillaceae</taxon>
        <taxon>Bacillus</taxon>
        <taxon>Bacillus cereus group</taxon>
    </lineage>
</organism>
<gene>
    <name evidence="2" type="primary">uvsE</name>
    <name type="ordered locus">BCA_5497</name>
</gene>
<name>UVSE_BACC3</name>
<proteinExistence type="inferred from homology"/>
<sequence>MIMRFGYVSHAMALWDCSPAKTITFTSFQKLSKQEREDKLYDVTKQNLEHTIRILHYNIAHEIPLYRLSSSIVPLATHPEVEFDYIGAFTPLWRKIGALIKEHNLRVSFHPNQFTLFTSDKPHITTNAITDMTYHYKVLDAIGIADSSYINIHVGGAYGNKEKAIERFHENIKKLPAHIKKQMTLENDDKTYTTAETLSICQKEKIPFVFDYHHHMANLCEEPLEELLPAIFETWSHTNIVPKVHISSPKSKKEFRAHAEYIDLEFIKPFLHVAKKINHNFDIMIESKQKDLAMLQFIQELSSIRGIKRISSSTLQW</sequence>
<comment type="function">
    <text evidence="1">Component in a DNA repair pathway. Removal of UV LIGHT damaged nucleotides. Recognizes pyrimidine dimers and cleave a phosphodiester bond immediately 5' to the lesion (By similarity).</text>
</comment>
<comment type="similarity">
    <text evidence="2">Belongs to the uve1/UvsE family.</text>
</comment>
<evidence type="ECO:0000250" key="1"/>
<evidence type="ECO:0000255" key="2">
    <source>
        <dbReference type="HAMAP-Rule" id="MF_00606"/>
    </source>
</evidence>
<protein>
    <recommendedName>
        <fullName evidence="2">UV DNA damage endonuclease</fullName>
        <shortName evidence="2">UV-endonuclease</shortName>
        <shortName evidence="2">UVED</shortName>
        <ecNumber evidence="2">3.-.-.-</ecNumber>
    </recommendedName>
</protein>
<keyword id="KW-0227">DNA damage</keyword>
<keyword id="KW-0228">DNA excision</keyword>
<keyword id="KW-0234">DNA repair</keyword>
<keyword id="KW-0255">Endonuclease</keyword>
<keyword id="KW-0378">Hydrolase</keyword>
<keyword id="KW-0540">Nuclease</keyword>
<dbReference type="EC" id="3.-.-.-" evidence="2"/>
<dbReference type="EMBL" id="CP001407">
    <property type="protein sequence ID" value="ACO27695.1"/>
    <property type="molecule type" value="Genomic_DNA"/>
</dbReference>
<dbReference type="RefSeq" id="WP_000605877.1">
    <property type="nucleotide sequence ID" value="NZ_CP009318.1"/>
</dbReference>
<dbReference type="SMR" id="C1F0S5"/>
<dbReference type="KEGG" id="bcx:BCA_5497"/>
<dbReference type="PATRIC" id="fig|572264.18.peg.5419"/>
<dbReference type="Proteomes" id="UP000002210">
    <property type="component" value="Chromosome"/>
</dbReference>
<dbReference type="GO" id="GO:0004519">
    <property type="term" value="F:endonuclease activity"/>
    <property type="evidence" value="ECO:0007669"/>
    <property type="project" value="UniProtKB-UniRule"/>
</dbReference>
<dbReference type="GO" id="GO:0006289">
    <property type="term" value="P:nucleotide-excision repair"/>
    <property type="evidence" value="ECO:0007669"/>
    <property type="project" value="InterPro"/>
</dbReference>
<dbReference type="GO" id="GO:0006290">
    <property type="term" value="P:pyrimidine dimer repair"/>
    <property type="evidence" value="ECO:0007669"/>
    <property type="project" value="UniProtKB-UniRule"/>
</dbReference>
<dbReference type="GO" id="GO:0009411">
    <property type="term" value="P:response to UV"/>
    <property type="evidence" value="ECO:0007669"/>
    <property type="project" value="InterPro"/>
</dbReference>
<dbReference type="Gene3D" id="3.20.20.150">
    <property type="entry name" value="Divalent-metal-dependent TIM barrel enzymes"/>
    <property type="match status" value="1"/>
</dbReference>
<dbReference type="HAMAP" id="MF_00606">
    <property type="entry name" value="UV_endonuclease"/>
    <property type="match status" value="1"/>
</dbReference>
<dbReference type="InterPro" id="IPR004601">
    <property type="entry name" value="UvdE"/>
</dbReference>
<dbReference type="InterPro" id="IPR023520">
    <property type="entry name" value="UvdE_bac"/>
</dbReference>
<dbReference type="InterPro" id="IPR036237">
    <property type="entry name" value="Xyl_isomerase-like_sf"/>
</dbReference>
<dbReference type="NCBIfam" id="TIGR00629">
    <property type="entry name" value="uvde"/>
    <property type="match status" value="1"/>
</dbReference>
<dbReference type="PANTHER" id="PTHR31290">
    <property type="entry name" value="UV-DAMAGE ENDONUCLEASE"/>
    <property type="match status" value="1"/>
</dbReference>
<dbReference type="PANTHER" id="PTHR31290:SF5">
    <property type="entry name" value="UV-DAMAGE ENDONUCLEASE"/>
    <property type="match status" value="1"/>
</dbReference>
<dbReference type="Pfam" id="PF03851">
    <property type="entry name" value="UvdE"/>
    <property type="match status" value="1"/>
</dbReference>
<dbReference type="SUPFAM" id="SSF51658">
    <property type="entry name" value="Xylose isomerase-like"/>
    <property type="match status" value="1"/>
</dbReference>